<keyword id="KW-0963">Cytoplasm</keyword>
<keyword id="KW-0378">Hydrolase</keyword>
<keyword id="KW-0694">RNA-binding</keyword>
<keyword id="KW-0820">tRNA-binding</keyword>
<protein>
    <recommendedName>
        <fullName evidence="1">Peptidyl-tRNA hydrolase</fullName>
        <shortName evidence="1">Pth</shortName>
        <ecNumber evidence="1">3.1.1.29</ecNumber>
    </recommendedName>
</protein>
<feature type="chain" id="PRO_1000075344" description="Peptidyl-tRNA hydrolase">
    <location>
        <begin position="1"/>
        <end position="194"/>
    </location>
</feature>
<feature type="active site" description="Proton acceptor" evidence="1">
    <location>
        <position position="22"/>
    </location>
</feature>
<feature type="binding site" evidence="1">
    <location>
        <position position="17"/>
    </location>
    <ligand>
        <name>tRNA</name>
        <dbReference type="ChEBI" id="CHEBI:17843"/>
    </ligand>
</feature>
<feature type="binding site" evidence="1">
    <location>
        <position position="68"/>
    </location>
    <ligand>
        <name>tRNA</name>
        <dbReference type="ChEBI" id="CHEBI:17843"/>
    </ligand>
</feature>
<feature type="binding site" evidence="1">
    <location>
        <position position="70"/>
    </location>
    <ligand>
        <name>tRNA</name>
        <dbReference type="ChEBI" id="CHEBI:17843"/>
    </ligand>
</feature>
<feature type="binding site" evidence="1">
    <location>
        <position position="116"/>
    </location>
    <ligand>
        <name>tRNA</name>
        <dbReference type="ChEBI" id="CHEBI:17843"/>
    </ligand>
</feature>
<feature type="site" description="Discriminates between blocked and unblocked aminoacyl-tRNA" evidence="1">
    <location>
        <position position="12"/>
    </location>
</feature>
<feature type="site" description="Stabilizes the basic form of H active site to accept a proton" evidence="1">
    <location>
        <position position="95"/>
    </location>
</feature>
<proteinExistence type="inferred from homology"/>
<accession>B0UVY6</accession>
<dbReference type="EC" id="3.1.1.29" evidence="1"/>
<dbReference type="EMBL" id="CP000947">
    <property type="protein sequence ID" value="ACA31548.1"/>
    <property type="molecule type" value="Genomic_DNA"/>
</dbReference>
<dbReference type="RefSeq" id="WP_012340873.1">
    <property type="nucleotide sequence ID" value="NC_010519.1"/>
</dbReference>
<dbReference type="SMR" id="B0UVY6"/>
<dbReference type="STRING" id="228400.HSM_1767"/>
<dbReference type="GeneID" id="31488074"/>
<dbReference type="KEGG" id="hsm:HSM_1767"/>
<dbReference type="HOGENOM" id="CLU_062456_3_1_6"/>
<dbReference type="GO" id="GO:0005737">
    <property type="term" value="C:cytoplasm"/>
    <property type="evidence" value="ECO:0007669"/>
    <property type="project" value="UniProtKB-SubCell"/>
</dbReference>
<dbReference type="GO" id="GO:0004045">
    <property type="term" value="F:peptidyl-tRNA hydrolase activity"/>
    <property type="evidence" value="ECO:0007669"/>
    <property type="project" value="UniProtKB-UniRule"/>
</dbReference>
<dbReference type="GO" id="GO:0000049">
    <property type="term" value="F:tRNA binding"/>
    <property type="evidence" value="ECO:0007669"/>
    <property type="project" value="UniProtKB-UniRule"/>
</dbReference>
<dbReference type="GO" id="GO:0006515">
    <property type="term" value="P:protein quality control for misfolded or incompletely synthesized proteins"/>
    <property type="evidence" value="ECO:0007669"/>
    <property type="project" value="UniProtKB-UniRule"/>
</dbReference>
<dbReference type="GO" id="GO:0072344">
    <property type="term" value="P:rescue of stalled ribosome"/>
    <property type="evidence" value="ECO:0007669"/>
    <property type="project" value="UniProtKB-UniRule"/>
</dbReference>
<dbReference type="CDD" id="cd00462">
    <property type="entry name" value="PTH"/>
    <property type="match status" value="1"/>
</dbReference>
<dbReference type="FunFam" id="3.40.50.1470:FF:000001">
    <property type="entry name" value="Peptidyl-tRNA hydrolase"/>
    <property type="match status" value="1"/>
</dbReference>
<dbReference type="Gene3D" id="3.40.50.1470">
    <property type="entry name" value="Peptidyl-tRNA hydrolase"/>
    <property type="match status" value="1"/>
</dbReference>
<dbReference type="HAMAP" id="MF_00083">
    <property type="entry name" value="Pept_tRNA_hydro_bact"/>
    <property type="match status" value="1"/>
</dbReference>
<dbReference type="InterPro" id="IPR001328">
    <property type="entry name" value="Pept_tRNA_hydro"/>
</dbReference>
<dbReference type="InterPro" id="IPR018171">
    <property type="entry name" value="Pept_tRNA_hydro_CS"/>
</dbReference>
<dbReference type="InterPro" id="IPR036416">
    <property type="entry name" value="Pept_tRNA_hydro_sf"/>
</dbReference>
<dbReference type="NCBIfam" id="TIGR00447">
    <property type="entry name" value="pth"/>
    <property type="match status" value="1"/>
</dbReference>
<dbReference type="PANTHER" id="PTHR17224">
    <property type="entry name" value="PEPTIDYL-TRNA HYDROLASE"/>
    <property type="match status" value="1"/>
</dbReference>
<dbReference type="PANTHER" id="PTHR17224:SF1">
    <property type="entry name" value="PEPTIDYL-TRNA HYDROLASE"/>
    <property type="match status" value="1"/>
</dbReference>
<dbReference type="Pfam" id="PF01195">
    <property type="entry name" value="Pept_tRNA_hydro"/>
    <property type="match status" value="1"/>
</dbReference>
<dbReference type="SUPFAM" id="SSF53178">
    <property type="entry name" value="Peptidyl-tRNA hydrolase-like"/>
    <property type="match status" value="1"/>
</dbReference>
<dbReference type="PROSITE" id="PS01195">
    <property type="entry name" value="PEPT_TRNA_HYDROL_1"/>
    <property type="match status" value="1"/>
</dbReference>
<dbReference type="PROSITE" id="PS01196">
    <property type="entry name" value="PEPT_TRNA_HYDROL_2"/>
    <property type="match status" value="1"/>
</dbReference>
<gene>
    <name evidence="1" type="primary">pth</name>
    <name type="ordered locus">HSM_1767</name>
</gene>
<name>PTH_HISS2</name>
<organism>
    <name type="scientific">Histophilus somni (strain 2336)</name>
    <name type="common">Haemophilus somnus</name>
    <dbReference type="NCBI Taxonomy" id="228400"/>
    <lineage>
        <taxon>Bacteria</taxon>
        <taxon>Pseudomonadati</taxon>
        <taxon>Pseudomonadota</taxon>
        <taxon>Gammaproteobacteria</taxon>
        <taxon>Pasteurellales</taxon>
        <taxon>Pasteurellaceae</taxon>
        <taxon>Histophilus</taxon>
    </lineage>
</organism>
<reference key="1">
    <citation type="submission" date="2008-02" db="EMBL/GenBank/DDBJ databases">
        <title>Complete sequence of Haemophilus somnus 2336.</title>
        <authorList>
            <consortium name="US DOE Joint Genome Institute"/>
            <person name="Siddaramappa S."/>
            <person name="Duncan A.J."/>
            <person name="Challacombe J.F."/>
            <person name="Rainey D."/>
            <person name="Gillaspy A.F."/>
            <person name="Carson M."/>
            <person name="Gipson J."/>
            <person name="Gipson M."/>
            <person name="Bruce D."/>
            <person name="Detter J.C."/>
            <person name="Han C.S."/>
            <person name="Land M."/>
            <person name="Tapia R."/>
            <person name="Thompson L.S."/>
            <person name="Orvis J."/>
            <person name="Zaitshik J."/>
            <person name="Barnes G."/>
            <person name="Brettin T.S."/>
            <person name="Dyer D.W."/>
            <person name="Inzana T.J."/>
        </authorList>
    </citation>
    <scope>NUCLEOTIDE SEQUENCE [LARGE SCALE GENOMIC DNA]</scope>
    <source>
        <strain>2336</strain>
    </source>
</reference>
<evidence type="ECO:0000255" key="1">
    <source>
        <dbReference type="HAMAP-Rule" id="MF_00083"/>
    </source>
</evidence>
<comment type="function">
    <text evidence="1">Hydrolyzes ribosome-free peptidyl-tRNAs (with 1 or more amino acids incorporated), which drop off the ribosome during protein synthesis, or as a result of ribosome stalling.</text>
</comment>
<comment type="function">
    <text evidence="1">Catalyzes the release of premature peptidyl moieties from peptidyl-tRNA molecules trapped in stalled 50S ribosomal subunits, and thus maintains levels of free tRNAs and 50S ribosomes.</text>
</comment>
<comment type="catalytic activity">
    <reaction evidence="1">
        <text>an N-acyl-L-alpha-aminoacyl-tRNA + H2O = an N-acyl-L-amino acid + a tRNA + H(+)</text>
        <dbReference type="Rhea" id="RHEA:54448"/>
        <dbReference type="Rhea" id="RHEA-COMP:10123"/>
        <dbReference type="Rhea" id="RHEA-COMP:13883"/>
        <dbReference type="ChEBI" id="CHEBI:15377"/>
        <dbReference type="ChEBI" id="CHEBI:15378"/>
        <dbReference type="ChEBI" id="CHEBI:59874"/>
        <dbReference type="ChEBI" id="CHEBI:78442"/>
        <dbReference type="ChEBI" id="CHEBI:138191"/>
        <dbReference type="EC" id="3.1.1.29"/>
    </reaction>
</comment>
<comment type="subunit">
    <text evidence="1">Monomer.</text>
</comment>
<comment type="subcellular location">
    <subcellularLocation>
        <location evidence="1">Cytoplasm</location>
    </subcellularLocation>
</comment>
<comment type="similarity">
    <text evidence="1">Belongs to the PTH family.</text>
</comment>
<sequence length="194" mass="21439">MSEIKLIVGLGNPGDKYADTRHNAGEWLIERLARRFNFNLSVESKFSGKTARAVISGQEMRFLVPTTFMNLSGKAVSALANFYRIPPEQILVLHDELDLPPGIAKLKQGGGHGGHNGLKDIIAQLANNKNFYRLRIGIGHPGDKNLVASYVLNKPSPTDWQLIDRTLDEATDCIEILMKEGITKATNRLNAFKA</sequence>